<gene>
    <name type="primary">ndhG</name>
</gene>
<keyword id="KW-0150">Chloroplast</keyword>
<keyword id="KW-0472">Membrane</keyword>
<keyword id="KW-0520">NAD</keyword>
<keyword id="KW-0521">NADP</keyword>
<keyword id="KW-0934">Plastid</keyword>
<keyword id="KW-0618">Plastoquinone</keyword>
<keyword id="KW-0874">Quinone</keyword>
<keyword id="KW-0793">Thylakoid</keyword>
<keyword id="KW-1278">Translocase</keyword>
<keyword id="KW-0812">Transmembrane</keyword>
<keyword id="KW-1133">Transmembrane helix</keyword>
<keyword id="KW-0813">Transport</keyword>
<feature type="chain" id="PRO_0000360293" description="NAD(P)H-quinone oxidoreductase subunit 6, chloroplastic">
    <location>
        <begin position="1"/>
        <end position="181"/>
    </location>
</feature>
<feature type="transmembrane region" description="Helical" evidence="2">
    <location>
        <begin position="13"/>
        <end position="33"/>
    </location>
</feature>
<feature type="transmembrane region" description="Helical" evidence="2">
    <location>
        <begin position="35"/>
        <end position="55"/>
    </location>
</feature>
<feature type="transmembrane region" description="Helical" evidence="2">
    <location>
        <begin position="64"/>
        <end position="84"/>
    </location>
</feature>
<feature type="transmembrane region" description="Helical" evidence="2">
    <location>
        <begin position="98"/>
        <end position="118"/>
    </location>
</feature>
<feature type="transmembrane region" description="Helical" evidence="2">
    <location>
        <begin position="152"/>
        <end position="172"/>
    </location>
</feature>
<geneLocation type="chloroplast"/>
<dbReference type="EC" id="7.1.1.-"/>
<dbReference type="EMBL" id="AY958085">
    <property type="protein sequence ID" value="AAX45703.1"/>
    <property type="molecule type" value="Genomic_DNA"/>
</dbReference>
<dbReference type="RefSeq" id="YP_636372.1">
    <property type="nucleotide sequence ID" value="NC_008116.1"/>
</dbReference>
<dbReference type="SMR" id="Q32S04"/>
<dbReference type="GeneID" id="4108663"/>
<dbReference type="GO" id="GO:0009535">
    <property type="term" value="C:chloroplast thylakoid membrane"/>
    <property type="evidence" value="ECO:0007669"/>
    <property type="project" value="UniProtKB-SubCell"/>
</dbReference>
<dbReference type="GO" id="GO:0008137">
    <property type="term" value="F:NADH dehydrogenase (ubiquinone) activity"/>
    <property type="evidence" value="ECO:0007669"/>
    <property type="project" value="InterPro"/>
</dbReference>
<dbReference type="GO" id="GO:0048038">
    <property type="term" value="F:quinone binding"/>
    <property type="evidence" value="ECO:0007669"/>
    <property type="project" value="UniProtKB-KW"/>
</dbReference>
<dbReference type="Gene3D" id="1.20.120.1200">
    <property type="entry name" value="NADH-ubiquinone/plastoquinone oxidoreductase chain 6, subunit NuoJ"/>
    <property type="match status" value="1"/>
</dbReference>
<dbReference type="InterPro" id="IPR001457">
    <property type="entry name" value="NADH_UbQ/plastoQ_OxRdtase_su6"/>
</dbReference>
<dbReference type="InterPro" id="IPR042106">
    <property type="entry name" value="Nuo/plastoQ_OxRdtase_6_NuoJ"/>
</dbReference>
<dbReference type="NCBIfam" id="NF005163">
    <property type="entry name" value="PRK06638.1-3"/>
    <property type="match status" value="1"/>
</dbReference>
<dbReference type="PANTHER" id="PTHR33269">
    <property type="entry name" value="NADH-UBIQUINONE OXIDOREDUCTASE CHAIN 6"/>
    <property type="match status" value="1"/>
</dbReference>
<dbReference type="PANTHER" id="PTHR33269:SF17">
    <property type="entry name" value="NADH-UBIQUINONE OXIDOREDUCTASE CHAIN 6"/>
    <property type="match status" value="1"/>
</dbReference>
<dbReference type="Pfam" id="PF00499">
    <property type="entry name" value="Oxidored_q3"/>
    <property type="match status" value="1"/>
</dbReference>
<reference key="1">
    <citation type="journal article" date="2005" name="BMC Biol.">
        <title>The complete chloroplast DNA sequences of the charophycean green algae Staurastrum and Zygnema reveal that the chloroplast genome underwent extensive changes during the evolution of the Zygnematales.</title>
        <authorList>
            <person name="Turmel M."/>
            <person name="Otis C."/>
            <person name="Lemieux C."/>
        </authorList>
    </citation>
    <scope>NUCLEOTIDE SEQUENCE [LARGE SCALE GENOMIC DNA]</scope>
</reference>
<protein>
    <recommendedName>
        <fullName>NAD(P)H-quinone oxidoreductase subunit 6, chloroplastic</fullName>
        <ecNumber>7.1.1.-</ecNumber>
    </recommendedName>
    <alternativeName>
        <fullName>NAD(P)H dehydrogenase subunit 6</fullName>
    </alternativeName>
    <alternativeName>
        <fullName>NADH-plastoquinone oxidoreductase subunit 6</fullName>
    </alternativeName>
</protein>
<organism>
    <name type="scientific">Staurastrum punctulatum</name>
    <name type="common">Green alga</name>
    <name type="synonym">Cosmoastrum punctulatum</name>
    <dbReference type="NCBI Taxonomy" id="102822"/>
    <lineage>
        <taxon>Eukaryota</taxon>
        <taxon>Viridiplantae</taxon>
        <taxon>Streptophyta</taxon>
        <taxon>Zygnematophyceae</taxon>
        <taxon>Zygnematophycidae</taxon>
        <taxon>Desmidiales</taxon>
        <taxon>Desmidiaceae</taxon>
        <taxon>Staurastrum</taxon>
    </lineage>
</organism>
<proteinExistence type="inferred from homology"/>
<name>NU6C_STAPU</name>
<accession>Q32S04</accession>
<comment type="function">
    <text evidence="1">NDH shuttles electrons from NAD(P)H:plastoquinone, via FMN and iron-sulfur (Fe-S) centers, to quinones in the photosynthetic chain and possibly in a chloroplast respiratory chain. The immediate electron acceptor for the enzyme in this species is believed to be plastoquinone. Couples the redox reaction to proton translocation, and thus conserves the redox energy in a proton gradient (By similarity).</text>
</comment>
<comment type="catalytic activity">
    <reaction>
        <text>a plastoquinone + NADH + (n+1) H(+)(in) = a plastoquinol + NAD(+) + n H(+)(out)</text>
        <dbReference type="Rhea" id="RHEA:42608"/>
        <dbReference type="Rhea" id="RHEA-COMP:9561"/>
        <dbReference type="Rhea" id="RHEA-COMP:9562"/>
        <dbReference type="ChEBI" id="CHEBI:15378"/>
        <dbReference type="ChEBI" id="CHEBI:17757"/>
        <dbReference type="ChEBI" id="CHEBI:57540"/>
        <dbReference type="ChEBI" id="CHEBI:57945"/>
        <dbReference type="ChEBI" id="CHEBI:62192"/>
    </reaction>
</comment>
<comment type="catalytic activity">
    <reaction>
        <text>a plastoquinone + NADPH + (n+1) H(+)(in) = a plastoquinol + NADP(+) + n H(+)(out)</text>
        <dbReference type="Rhea" id="RHEA:42612"/>
        <dbReference type="Rhea" id="RHEA-COMP:9561"/>
        <dbReference type="Rhea" id="RHEA-COMP:9562"/>
        <dbReference type="ChEBI" id="CHEBI:15378"/>
        <dbReference type="ChEBI" id="CHEBI:17757"/>
        <dbReference type="ChEBI" id="CHEBI:57783"/>
        <dbReference type="ChEBI" id="CHEBI:58349"/>
        <dbReference type="ChEBI" id="CHEBI:62192"/>
    </reaction>
</comment>
<comment type="subunit">
    <text evidence="1">NDH is composed of at least 16 different subunits, 5 of which are encoded in the nucleus.</text>
</comment>
<comment type="subcellular location">
    <subcellularLocation>
        <location evidence="1">Plastid</location>
        <location evidence="1">Chloroplast thylakoid membrane</location>
        <topology evidence="1">Multi-pass membrane protein</topology>
    </subcellularLocation>
</comment>
<comment type="similarity">
    <text evidence="3">Belongs to the complex I subunit 6 family.</text>
</comment>
<sequence length="181" mass="19830">MNMVSLPETINSPILYFLDVGILLGGLGVVFFGKIIYSALFLGVVFVCVALLYLLLNADFLAAAQILIYVGAINVLIVFAIMLINKPETKINKKKITFGDILSGFSVFGLFSFLIIMILNTTWLQPTLVSQEVKNSFQSIDIIGIHLLTDLLLPFELLSILLLVALVGAITIARKEISPKI</sequence>
<evidence type="ECO:0000250" key="1"/>
<evidence type="ECO:0000255" key="2"/>
<evidence type="ECO:0000305" key="3"/>